<comment type="function">
    <text evidence="1">Component of the nexin-dynein regulatory complex (N-DRC), a key regulator of ciliary/flagellar motility which maintains the alignment and integrity of the distal axoneme and regulates microtubule sliding in motile axonemes.</text>
</comment>
<comment type="subunit">
    <text evidence="1">Component of the nexin-dynein regulatory complex (N-DRC).</text>
</comment>
<comment type="subcellular location">
    <subcellularLocation>
        <location evidence="1">Cytoplasm</location>
        <location evidence="1">Cytoskeleton</location>
        <location evidence="1">Flagellum axoneme</location>
    </subcellularLocation>
</comment>
<comment type="similarity">
    <text evidence="4">Belongs to the DRC12 family.</text>
</comment>
<feature type="chain" id="PRO_0000342651" description="Dynein regulatory complex protein 12">
    <location>
        <begin position="1"/>
        <end position="202"/>
    </location>
</feature>
<feature type="region of interest" description="Disordered" evidence="3">
    <location>
        <begin position="1"/>
        <end position="30"/>
    </location>
</feature>
<feature type="coiled-coil region" evidence="2">
    <location>
        <begin position="26"/>
        <end position="146"/>
    </location>
</feature>
<feature type="compositionally biased region" description="Basic residues" evidence="3">
    <location>
        <begin position="1"/>
        <end position="20"/>
    </location>
</feature>
<organism>
    <name type="scientific">Mus musculus</name>
    <name type="common">Mouse</name>
    <dbReference type="NCBI Taxonomy" id="10090"/>
    <lineage>
        <taxon>Eukaryota</taxon>
        <taxon>Metazoa</taxon>
        <taxon>Chordata</taxon>
        <taxon>Craniata</taxon>
        <taxon>Vertebrata</taxon>
        <taxon>Euteleostomi</taxon>
        <taxon>Mammalia</taxon>
        <taxon>Eutheria</taxon>
        <taxon>Euarchontoglires</taxon>
        <taxon>Glires</taxon>
        <taxon>Rodentia</taxon>
        <taxon>Myomorpha</taxon>
        <taxon>Muroidea</taxon>
        <taxon>Muridae</taxon>
        <taxon>Murinae</taxon>
        <taxon>Mus</taxon>
        <taxon>Mus</taxon>
    </lineage>
</organism>
<gene>
    <name type="primary">Drc12</name>
    <name type="synonym">Ccdc153</name>
</gene>
<reference key="1">
    <citation type="journal article" date="2009" name="PLoS Biol.">
        <title>Lineage-specific biology revealed by a finished genome assembly of the mouse.</title>
        <authorList>
            <person name="Church D.M."/>
            <person name="Goodstadt L."/>
            <person name="Hillier L.W."/>
            <person name="Zody M.C."/>
            <person name="Goldstein S."/>
            <person name="She X."/>
            <person name="Bult C.J."/>
            <person name="Agarwala R."/>
            <person name="Cherry J.L."/>
            <person name="DiCuccio M."/>
            <person name="Hlavina W."/>
            <person name="Kapustin Y."/>
            <person name="Meric P."/>
            <person name="Maglott D."/>
            <person name="Birtle Z."/>
            <person name="Marques A.C."/>
            <person name="Graves T."/>
            <person name="Zhou S."/>
            <person name="Teague B."/>
            <person name="Potamousis K."/>
            <person name="Churas C."/>
            <person name="Place M."/>
            <person name="Herschleb J."/>
            <person name="Runnheim R."/>
            <person name="Forrest D."/>
            <person name="Amos-Landgraf J."/>
            <person name="Schwartz D.C."/>
            <person name="Cheng Z."/>
            <person name="Lindblad-Toh K."/>
            <person name="Eichler E.E."/>
            <person name="Ponting C.P."/>
        </authorList>
    </citation>
    <scope>NUCLEOTIDE SEQUENCE [LARGE SCALE GENOMIC DNA]</scope>
    <source>
        <strain>C57BL/6J</strain>
    </source>
</reference>
<evidence type="ECO:0000250" key="1">
    <source>
        <dbReference type="UniProtKB" id="Q22RH5"/>
    </source>
</evidence>
<evidence type="ECO:0000255" key="2"/>
<evidence type="ECO:0000256" key="3">
    <source>
        <dbReference type="SAM" id="MobiDB-lite"/>
    </source>
</evidence>
<evidence type="ECO:0000305" key="4"/>
<accession>P0C7Q1</accession>
<dbReference type="EMBL" id="AC124577">
    <property type="status" value="NOT_ANNOTATED_CDS"/>
    <property type="molecule type" value="Genomic_DNA"/>
</dbReference>
<dbReference type="CCDS" id="CCDS52778.1"/>
<dbReference type="RefSeq" id="NP_001074838.2">
    <property type="nucleotide sequence ID" value="NM_001081369.2"/>
</dbReference>
<dbReference type="RefSeq" id="XP_006510441.2">
    <property type="nucleotide sequence ID" value="XM_006510378.3"/>
</dbReference>
<dbReference type="SMR" id="P0C7Q1"/>
<dbReference type="FunCoup" id="P0C7Q1">
    <property type="interactions" value="6"/>
</dbReference>
<dbReference type="STRING" id="10090.ENSMUSP00000090082"/>
<dbReference type="PhosphoSitePlus" id="P0C7Q1"/>
<dbReference type="jPOST" id="P0C7Q1"/>
<dbReference type="PaxDb" id="10090-ENSMUSP00000090082"/>
<dbReference type="Antibodypedia" id="47797">
    <property type="antibodies" value="105 antibodies from 22 providers"/>
</dbReference>
<dbReference type="Ensembl" id="ENSMUST00000092426.5">
    <property type="protein sequence ID" value="ENSMUSP00000090082.4"/>
    <property type="gene ID" value="ENSMUSG00000070306.4"/>
</dbReference>
<dbReference type="GeneID" id="270150"/>
<dbReference type="KEGG" id="mmu:270150"/>
<dbReference type="UCSC" id="uc009pcf.2">
    <property type="organism name" value="mouse"/>
</dbReference>
<dbReference type="AGR" id="MGI:2448587"/>
<dbReference type="CTD" id="270150"/>
<dbReference type="MGI" id="MGI:2448587">
    <property type="gene designation" value="Ccdc153"/>
</dbReference>
<dbReference type="VEuPathDB" id="HostDB:ENSMUSG00000070306"/>
<dbReference type="eggNOG" id="ENOG502S1BN">
    <property type="taxonomic scope" value="Eukaryota"/>
</dbReference>
<dbReference type="GeneTree" id="ENSGT00390000016289"/>
<dbReference type="HOGENOM" id="CLU_088442_0_0_1"/>
<dbReference type="InParanoid" id="P0C7Q1"/>
<dbReference type="OMA" id="HAKYKEQ"/>
<dbReference type="PhylomeDB" id="P0C7Q1"/>
<dbReference type="TreeFam" id="TF343461"/>
<dbReference type="BioGRID-ORCS" id="270150">
    <property type="hits" value="2 hits in 77 CRISPR screens"/>
</dbReference>
<dbReference type="ChiTaRS" id="Ccdc153">
    <property type="organism name" value="mouse"/>
</dbReference>
<dbReference type="PRO" id="PR:P0C7Q1"/>
<dbReference type="Proteomes" id="UP000000589">
    <property type="component" value="Chromosome 9"/>
</dbReference>
<dbReference type="RNAct" id="P0C7Q1">
    <property type="molecule type" value="protein"/>
</dbReference>
<dbReference type="Bgee" id="ENSMUSG00000070306">
    <property type="expression patterns" value="Expressed in olfactory epithelium and 59 other cell types or tissues"/>
</dbReference>
<dbReference type="ExpressionAtlas" id="P0C7Q1">
    <property type="expression patterns" value="baseline and differential"/>
</dbReference>
<dbReference type="GO" id="GO:0005737">
    <property type="term" value="C:cytoplasm"/>
    <property type="evidence" value="ECO:0007669"/>
    <property type="project" value="UniProtKB-KW"/>
</dbReference>
<dbReference type="GO" id="GO:0005856">
    <property type="term" value="C:cytoskeleton"/>
    <property type="evidence" value="ECO:0007669"/>
    <property type="project" value="UniProtKB-KW"/>
</dbReference>
<dbReference type="GO" id="GO:0031514">
    <property type="term" value="C:motile cilium"/>
    <property type="evidence" value="ECO:0007669"/>
    <property type="project" value="UniProtKB-KW"/>
</dbReference>
<dbReference type="InterPro" id="IPR033585">
    <property type="entry name" value="DRC12-like"/>
</dbReference>
<dbReference type="PANTHER" id="PTHR28656">
    <property type="entry name" value="COILED-COIL DOMAIN-CONTAINING PROTEIN 153"/>
    <property type="match status" value="1"/>
</dbReference>
<dbReference type="PANTHER" id="PTHR28656:SF1">
    <property type="entry name" value="COILED-COIL DOMAIN-CONTAINING PROTEIN 153"/>
    <property type="match status" value="1"/>
</dbReference>
<sequence>MPPKTKGRGRKAEARKKKKNSSPGVEAEAKHRLVLLEKELLQDRLALQREEARRAKASEDRLKQRLQGLEAELERTQSEGKAIYAEMSRQRQALKEELGTRSKQLEEEVRSLKEQLETCQREAKTAKEEAERALRKQDGTLAQLHAHVADMEAKYEEILHDNLDCLLAKLRVVKPHWDANVLRLHTRLKEQLRQFGLNPLDL</sequence>
<proteinExistence type="inferred from homology"/>
<protein>
    <recommendedName>
        <fullName>Dynein regulatory complex protein 12</fullName>
    </recommendedName>
</protein>
<name>DRC12_MOUSE</name>
<keyword id="KW-0966">Cell projection</keyword>
<keyword id="KW-0969">Cilium</keyword>
<keyword id="KW-0175">Coiled coil</keyword>
<keyword id="KW-0963">Cytoplasm</keyword>
<keyword id="KW-0206">Cytoskeleton</keyword>
<keyword id="KW-0282">Flagellum</keyword>
<keyword id="KW-1185">Reference proteome</keyword>